<evidence type="ECO:0000255" key="1"/>
<evidence type="ECO:0000255" key="2">
    <source>
        <dbReference type="PROSITE-ProRule" id="PRU00498"/>
    </source>
</evidence>
<evidence type="ECO:0000269" key="3">
    <source>
    </source>
</evidence>
<evidence type="ECO:0000269" key="4">
    <source>
    </source>
</evidence>
<evidence type="ECO:0000269" key="5">
    <source>
    </source>
</evidence>
<evidence type="ECO:0000303" key="6">
    <source>
    </source>
</evidence>
<evidence type="ECO:0000303" key="7">
    <source>
    </source>
</evidence>
<evidence type="ECO:0000305" key="8"/>
<evidence type="ECO:0000305" key="9">
    <source>
    </source>
</evidence>
<evidence type="ECO:0000305" key="10">
    <source>
    </source>
</evidence>
<gene>
    <name evidence="7" type="primary">fsqC</name>
    <name evidence="6" type="synonym">fmpB</name>
    <name type="ORF">AFUA_6G03450</name>
</gene>
<keyword id="KW-0325">Glycoprotein</keyword>
<keyword id="KW-0489">Methyltransferase</keyword>
<keyword id="KW-1185">Reference proteome</keyword>
<keyword id="KW-0949">S-adenosyl-L-methionine</keyword>
<keyword id="KW-0732">Signal</keyword>
<keyword id="KW-0808">Transferase</keyword>
<organism>
    <name type="scientific">Aspergillus fumigatus (strain ATCC MYA-4609 / CBS 101355 / FGSC A1100 / Af293)</name>
    <name type="common">Neosartorya fumigata</name>
    <dbReference type="NCBI Taxonomy" id="330879"/>
    <lineage>
        <taxon>Eukaryota</taxon>
        <taxon>Fungi</taxon>
        <taxon>Dikarya</taxon>
        <taxon>Ascomycota</taxon>
        <taxon>Pezizomycotina</taxon>
        <taxon>Eurotiomycetes</taxon>
        <taxon>Eurotiomycetidae</taxon>
        <taxon>Eurotiales</taxon>
        <taxon>Aspergillaceae</taxon>
        <taxon>Aspergillus</taxon>
        <taxon>Aspergillus subgen. Fumigati</taxon>
    </lineage>
</organism>
<feature type="signal peptide" evidence="1">
    <location>
        <begin position="1"/>
        <end position="18"/>
    </location>
</feature>
<feature type="chain" id="PRO_0000438870" description="N-methyltransferase fsqC" evidence="1">
    <location>
        <begin position="19"/>
        <end position="366"/>
    </location>
</feature>
<feature type="glycosylation site" description="N-linked (GlcNAc...) asparagine" evidence="2">
    <location>
        <position position="270"/>
    </location>
</feature>
<protein>
    <recommendedName>
        <fullName evidence="7">N-methyltransferase fsqC</fullName>
        <ecNumber evidence="10">2.1.1.-</ecNumber>
    </recommendedName>
    <alternativeName>
        <fullName evidence="6">Fumipyrrole biosynthesis protein B</fullName>
    </alternativeName>
    <alternativeName>
        <fullName evidence="7">Fumisoquins biosynthesis protein C</fullName>
    </alternativeName>
</protein>
<comment type="function">
    <text evidence="3 4 5 10">N-methyltransferase; part of the gene cluster that mediates the biosynthesis of the isoquinoline alkaloids fumisoquin A, fumisoquin B and fumisoquin C; as well as small amounts of fumipyrrole as a shunt metabolite (PubMed:25582336, PubMed:27065235). The products of the cluster lead to a brown coloration and are important for growth and conidiation (PubMed:25582336). The nonribosomal peptide synthetase-like protein fsqF, which lacks a canonical condensation domain, is required for addition of a serine-derived dehydroalanine moiety to activated tyrosine but is not essential for the subsequent steps leading to isoquinoline formation (PubMed:27065235). A different enzyme, most likely the ATP-grasp enzyme fsqD, is responsible for activation of tyrosine (Probable). Three additional enzymes encoded by the fsq cluster, the N-methyltransferase fsqC, the phenol 2-monooxygenase fsqG and the FAD-dependent oxidase fsqB, catalyze the formation of the isoquinoline ring system in the fumisoquins (PubMed:27065235, PubMed:30194285). FsqB converts the fspF thiolation domain-bound (2S,4S,5S)-2-amino-6-(3,4-dihydroxyphenyl)-4-hydroxy-5-(methylamino)hexanoyl into isoquinoline (PubMed:27065235, PubMed:30194285). The cyclization most likely proceeds via a two-step mechanism, beginning with FAD-dependent oxidation of the methyl group to an iminium species followed by electrophilic attack on the deprotonated phenol (Probable).</text>
</comment>
<comment type="pathway">
    <text evidence="9">Secondary metabolite biosynthesis.</text>
</comment>
<comment type="induction">
    <text evidence="3 4">Expression is positively regulated by the fumisoquins biosynthesis specific transcription factor fsqA (PubMed:25582336).</text>
</comment>
<comment type="disruption phenotype">
    <text evidence="4">Leads to complete abolishment of isoquinoline alkaloid production and accumulation of a series of benzyl pyrroles, including fumipyrrole.</text>
</comment>
<comment type="similarity">
    <text evidence="8">Belongs to the methyltransferase superfamily.</text>
</comment>
<sequence>MSSNVQDIRGWPPPFANAAYQPDASSRRARYGGLQVHNLRQATTANSLVPSIIQGLRAEDRELPSLLLWDDQGLSLFNAILDSPEYYLANKEWALLHNEVHNIVASISSGDRLVELGAGNMKKTALILHTLQSQRKYIHYIACDVDRVALQRGLRNLQAIFPASTSSIKIQGLVATYEDCAAWLQRNPGSGHTSLMWLGNSLANFPPPEASEYIRSFLSTGASLILALDGCQDHEQIARAYEGPSNQKFVLNGLRHANDVLGTDAFDVRNWSFLGRWNPELWMHESFYAAKRDLTLKIGRETFVFRKGETIRSIRSGKWPKPKVVDICREAGGDVVDWWMNPDESYGKSTTLMGYLARVLIDSVSD</sequence>
<accession>Q4WD44</accession>
<reference key="1">
    <citation type="journal article" date="2005" name="Nature">
        <title>Genomic sequence of the pathogenic and allergenic filamentous fungus Aspergillus fumigatus.</title>
        <authorList>
            <person name="Nierman W.C."/>
            <person name="Pain A."/>
            <person name="Anderson M.J."/>
            <person name="Wortman J.R."/>
            <person name="Kim H.S."/>
            <person name="Arroyo J."/>
            <person name="Berriman M."/>
            <person name="Abe K."/>
            <person name="Archer D.B."/>
            <person name="Bermejo C."/>
            <person name="Bennett J.W."/>
            <person name="Bowyer P."/>
            <person name="Chen D."/>
            <person name="Collins M."/>
            <person name="Coulsen R."/>
            <person name="Davies R."/>
            <person name="Dyer P.S."/>
            <person name="Farman M.L."/>
            <person name="Fedorova N."/>
            <person name="Fedorova N.D."/>
            <person name="Feldblyum T.V."/>
            <person name="Fischer R."/>
            <person name="Fosker N."/>
            <person name="Fraser A."/>
            <person name="Garcia J.L."/>
            <person name="Garcia M.J."/>
            <person name="Goble A."/>
            <person name="Goldman G.H."/>
            <person name="Gomi K."/>
            <person name="Griffith-Jones S."/>
            <person name="Gwilliam R."/>
            <person name="Haas B.J."/>
            <person name="Haas H."/>
            <person name="Harris D.E."/>
            <person name="Horiuchi H."/>
            <person name="Huang J."/>
            <person name="Humphray S."/>
            <person name="Jimenez J."/>
            <person name="Keller N."/>
            <person name="Khouri H."/>
            <person name="Kitamoto K."/>
            <person name="Kobayashi T."/>
            <person name="Konzack S."/>
            <person name="Kulkarni R."/>
            <person name="Kumagai T."/>
            <person name="Lafton A."/>
            <person name="Latge J.-P."/>
            <person name="Li W."/>
            <person name="Lord A."/>
            <person name="Lu C."/>
            <person name="Majoros W.H."/>
            <person name="May G.S."/>
            <person name="Miller B.L."/>
            <person name="Mohamoud Y."/>
            <person name="Molina M."/>
            <person name="Monod M."/>
            <person name="Mouyna I."/>
            <person name="Mulligan S."/>
            <person name="Murphy L.D."/>
            <person name="O'Neil S."/>
            <person name="Paulsen I."/>
            <person name="Penalva M.A."/>
            <person name="Pertea M."/>
            <person name="Price C."/>
            <person name="Pritchard B.L."/>
            <person name="Quail M.A."/>
            <person name="Rabbinowitsch E."/>
            <person name="Rawlins N."/>
            <person name="Rajandream M.A."/>
            <person name="Reichard U."/>
            <person name="Renauld H."/>
            <person name="Robson G.D."/>
            <person name="Rodriguez de Cordoba S."/>
            <person name="Rodriguez-Pena J.M."/>
            <person name="Ronning C.M."/>
            <person name="Rutter S."/>
            <person name="Salzberg S.L."/>
            <person name="Sanchez M."/>
            <person name="Sanchez-Ferrero J.C."/>
            <person name="Saunders D."/>
            <person name="Seeger K."/>
            <person name="Squares R."/>
            <person name="Squares S."/>
            <person name="Takeuchi M."/>
            <person name="Tekaia F."/>
            <person name="Turner G."/>
            <person name="Vazquez de Aldana C.R."/>
            <person name="Weidman J."/>
            <person name="White O."/>
            <person name="Woodward J.R."/>
            <person name="Yu J.-H."/>
            <person name="Fraser C.M."/>
            <person name="Galagan J.E."/>
            <person name="Asai K."/>
            <person name="Machida M."/>
            <person name="Hall N."/>
            <person name="Barrell B.G."/>
            <person name="Denning D.W."/>
        </authorList>
    </citation>
    <scope>NUCLEOTIDE SEQUENCE [LARGE SCALE GENOMIC DNA]</scope>
    <source>
        <strain>ATCC MYA-4609 / CBS 101355 / FGSC A1100 / Af293</strain>
    </source>
</reference>
<reference key="2">
    <citation type="journal article" date="2015" name="Mol. Microbiol.">
        <title>Transcriptome analysis of cyclic AMP-dependent protein kinase A-regulated genes reveals the production of the novel natural compound fumipyrrole by Aspergillus fumigatus.</title>
        <authorList>
            <person name="Macheleidt J."/>
            <person name="Scherlach K."/>
            <person name="Neuwirth T."/>
            <person name="Schmidt-Heck W."/>
            <person name="Strassburger M."/>
            <person name="Spraker J."/>
            <person name="Baccile J.A."/>
            <person name="Schroeder F.C."/>
            <person name="Keller N.P."/>
            <person name="Hertweck C."/>
            <person name="Heinekamp T."/>
            <person name="Brakhage A.A."/>
        </authorList>
    </citation>
    <scope>FUNCTION</scope>
    <scope>INDUCTION</scope>
</reference>
<reference key="3">
    <citation type="journal article" date="2016" name="Nat. Chem. Biol.">
        <title>Plant-like biosynthesis of isoquinoline alkaloids in Aspergillus fumigatus.</title>
        <authorList>
            <person name="Baccile J.A."/>
            <person name="Spraker J.E."/>
            <person name="Le H.H."/>
            <person name="Brandenburger E."/>
            <person name="Gomez C."/>
            <person name="Bok J.W."/>
            <person name="Macheleidt J."/>
            <person name="Brakhage A.A."/>
            <person name="Hoffmeister D."/>
            <person name="Keller N.P."/>
            <person name="Schroeder F.C."/>
        </authorList>
    </citation>
    <scope>FUNCTION</scope>
    <scope>DISRUPTION PHENOTYPE</scope>
</reference>
<reference key="4">
    <citation type="journal article" date="2018" name="J. Biol. Chem.">
        <title>Oxidative cyclization of N-methyl-dopa by a fungal flavoenzyme of the amine oxidase family.</title>
        <authorList>
            <person name="Lahham M."/>
            <person name="Pavkov-Keller T."/>
            <person name="Fuchs M."/>
            <person name="Niederhauser J."/>
            <person name="Chalhoub G."/>
            <person name="Daniel B."/>
            <person name="Kroutil W."/>
            <person name="Gruber K."/>
            <person name="Macheroux P."/>
        </authorList>
    </citation>
    <scope>FUNCTION</scope>
</reference>
<dbReference type="EC" id="2.1.1.-" evidence="10"/>
<dbReference type="EMBL" id="AAHF01000012">
    <property type="protein sequence ID" value="EAL85694.1"/>
    <property type="molecule type" value="Genomic_DNA"/>
</dbReference>
<dbReference type="RefSeq" id="XP_747732.1">
    <property type="nucleotide sequence ID" value="XM_742639.1"/>
</dbReference>
<dbReference type="SMR" id="Q4WD44"/>
<dbReference type="STRING" id="330879.Q4WD44"/>
<dbReference type="GlyCosmos" id="Q4WD44">
    <property type="glycosylation" value="1 site, No reported glycans"/>
</dbReference>
<dbReference type="EnsemblFungi" id="EAL85694">
    <property type="protein sequence ID" value="EAL85694"/>
    <property type="gene ID" value="AFUA_6G03450"/>
</dbReference>
<dbReference type="GeneID" id="3505179"/>
<dbReference type="KEGG" id="afm:AFUA_6G03450"/>
<dbReference type="VEuPathDB" id="FungiDB:Afu6g03450"/>
<dbReference type="eggNOG" id="ENOG502SQAU">
    <property type="taxonomic scope" value="Eukaryota"/>
</dbReference>
<dbReference type="HOGENOM" id="CLU_049766_0_2_1"/>
<dbReference type="InParanoid" id="Q4WD44"/>
<dbReference type="OMA" id="KYLWDET"/>
<dbReference type="OrthoDB" id="659at2759"/>
<dbReference type="Proteomes" id="UP000002530">
    <property type="component" value="Chromosome 6"/>
</dbReference>
<dbReference type="GO" id="GO:0008168">
    <property type="term" value="F:methyltransferase activity"/>
    <property type="evidence" value="ECO:0007669"/>
    <property type="project" value="UniProtKB-KW"/>
</dbReference>
<dbReference type="GO" id="GO:0032259">
    <property type="term" value="P:methylation"/>
    <property type="evidence" value="ECO:0007669"/>
    <property type="project" value="UniProtKB-KW"/>
</dbReference>
<dbReference type="Gene3D" id="3.40.50.150">
    <property type="entry name" value="Vaccinia Virus protein VP39"/>
    <property type="match status" value="1"/>
</dbReference>
<dbReference type="InterPro" id="IPR051128">
    <property type="entry name" value="EgtD_Methyltrsf_superfamily"/>
</dbReference>
<dbReference type="InterPro" id="IPR019257">
    <property type="entry name" value="MeTrfase_dom"/>
</dbReference>
<dbReference type="InterPro" id="IPR017804">
    <property type="entry name" value="MeTrfase_EgtD-like"/>
</dbReference>
<dbReference type="InterPro" id="IPR029063">
    <property type="entry name" value="SAM-dependent_MTases_sf"/>
</dbReference>
<dbReference type="InterPro" id="IPR017805">
    <property type="entry name" value="SAM_MeTrfase_EasF-type_put"/>
</dbReference>
<dbReference type="NCBIfam" id="TIGR03439">
    <property type="entry name" value="methyl_EasF"/>
    <property type="match status" value="1"/>
</dbReference>
<dbReference type="PANTHER" id="PTHR43397">
    <property type="entry name" value="ERGOTHIONEINE BIOSYNTHESIS PROTEIN 1"/>
    <property type="match status" value="1"/>
</dbReference>
<dbReference type="PANTHER" id="PTHR43397:SF2">
    <property type="entry name" value="HISTIDINE-SPECIFIC METHYLTRANSFERASE SAM-DEPENDENT DOMAIN-CONTAINING PROTEIN"/>
    <property type="match status" value="1"/>
</dbReference>
<dbReference type="Pfam" id="PF10017">
    <property type="entry name" value="Methyltransf_33"/>
    <property type="match status" value="1"/>
</dbReference>
<dbReference type="PIRSF" id="PIRSF018005">
    <property type="entry name" value="UCP018005"/>
    <property type="match status" value="1"/>
</dbReference>
<dbReference type="SUPFAM" id="SSF53335">
    <property type="entry name" value="S-adenosyl-L-methionine-dependent methyltransferases"/>
    <property type="match status" value="1"/>
</dbReference>
<proteinExistence type="evidence at transcript level"/>
<name>FSQC_ASPFU</name>